<comment type="function">
    <text evidence="1">DNA-binding protein that regulates the transcription of several genes and is involved in heart development and limb pattern formation. Binds to the core DNA motif of NPPA promoter.</text>
</comment>
<comment type="subunit">
    <text evidence="1">Monomer. Homodimer (via the T-box); binds DNA as homodimer. Interacts (via the T-box) with NKX2-5 (via the homeobox); this complex binds DNA. Interacts with GATA4. Interacts with KAT2A and KAT2B.</text>
</comment>
<comment type="subcellular location">
    <subcellularLocation>
        <location evidence="1 2">Nucleus</location>
    </subcellularLocation>
    <subcellularLocation>
        <location evidence="1">Cytoplasm</location>
    </subcellularLocation>
    <text evidence="1">Shuttles between the cytoplasm and the nucleus. Acetylation at Lys-338 promotes nuclear retention.</text>
</comment>
<comment type="domain">
    <text evidence="1">The T-Box domain binds to double-stranded DNA.</text>
</comment>
<comment type="PTM">
    <text evidence="1">Acetylation at Lys-338 by KAT2A and KAT2B promotes nuclear retention.</text>
</comment>
<proteinExistence type="evidence at transcript level"/>
<gene>
    <name type="primary">Tbx5</name>
</gene>
<keyword id="KW-0007">Acetylation</keyword>
<keyword id="KW-0963">Cytoplasm</keyword>
<keyword id="KW-0217">Developmental protein</keyword>
<keyword id="KW-0238">DNA-binding</keyword>
<keyword id="KW-0539">Nucleus</keyword>
<keyword id="KW-1185">Reference proteome</keyword>
<keyword id="KW-0804">Transcription</keyword>
<keyword id="KW-0805">Transcription regulation</keyword>
<organism>
    <name type="scientific">Rattus norvegicus</name>
    <name type="common">Rat</name>
    <dbReference type="NCBI Taxonomy" id="10116"/>
    <lineage>
        <taxon>Eukaryota</taxon>
        <taxon>Metazoa</taxon>
        <taxon>Chordata</taxon>
        <taxon>Craniata</taxon>
        <taxon>Vertebrata</taxon>
        <taxon>Euteleostomi</taxon>
        <taxon>Mammalia</taxon>
        <taxon>Eutheria</taxon>
        <taxon>Euarchontoglires</taxon>
        <taxon>Glires</taxon>
        <taxon>Rodentia</taxon>
        <taxon>Myomorpha</taxon>
        <taxon>Muroidea</taxon>
        <taxon>Muridae</taxon>
        <taxon>Murinae</taxon>
        <taxon>Rattus</taxon>
    </lineage>
</organism>
<sequence length="517" mass="57745">MADADEGFGLARTPLEPDSKDRSCDSKPESALGAPSKSPSSPQAAFTQQGMEGIKVFLHERELWLKFHEVGTEMIITKAGRQMFPSYKVKVTGLNPKTKYILLMDIVPADDHRYKFADNKWSVTGKAEPAMPGRLYVHPDSPATGAHWMRQLVSFQKLKLTNNHLDPFGHIILNSMHKYQPRLHIVKADENNGFGSKNTAFCTHVFPETAFIAVTSYQNHKITQLKIENNPFAKGFRGSDDLELHRMSRMRSKEYPVVPRSTVRHKVANHSPFSSETRALSTSSNLGSQYQCENGVSGPSQDLLPPPNPYPLAQEHSQIYHCTKRKDEECSSTEHPYKKPYMETSPSEEDTFYRSGYPQQQGLSTSYRTESAQRQACMYASSAPPSEPVPSLEDISCNTWPSMPSYSSCTVTTVQPMDRLPYQHFSAHFTSGPLVPRLAGMANHGSPQLGEGMFQHQTSVTHQPVVRQCGPQTGLQSPGSLQPPEFLYTHGVPRTLSPHQYHSVHGVGMVPEWSENS</sequence>
<feature type="chain" id="PRO_0000184437" description="T-box transcription factor TBX5">
    <location>
        <begin position="1"/>
        <end position="517"/>
    </location>
</feature>
<feature type="DNA-binding region" description="T-box" evidence="1 2">
    <location>
        <begin position="58"/>
        <end position="238"/>
    </location>
</feature>
<feature type="region of interest" description="Disordered" evidence="3">
    <location>
        <begin position="1"/>
        <end position="46"/>
    </location>
</feature>
<feature type="region of interest" description="Disordered" evidence="3">
    <location>
        <begin position="270"/>
        <end position="313"/>
    </location>
</feature>
<feature type="region of interest" description="Disordered" evidence="3">
    <location>
        <begin position="331"/>
        <end position="369"/>
    </location>
</feature>
<feature type="compositionally biased region" description="Basic and acidic residues" evidence="3">
    <location>
        <begin position="15"/>
        <end position="28"/>
    </location>
</feature>
<feature type="compositionally biased region" description="Low complexity" evidence="3">
    <location>
        <begin position="34"/>
        <end position="45"/>
    </location>
</feature>
<feature type="compositionally biased region" description="Polar residues" evidence="3">
    <location>
        <begin position="271"/>
        <end position="300"/>
    </location>
</feature>
<feature type="compositionally biased region" description="Polar residues" evidence="3">
    <location>
        <begin position="357"/>
        <end position="369"/>
    </location>
</feature>
<feature type="modified residue" description="N6-acetyllysine" evidence="1">
    <location>
        <position position="338"/>
    </location>
</feature>
<evidence type="ECO:0000250" key="1">
    <source>
        <dbReference type="UniProtKB" id="Q99593"/>
    </source>
</evidence>
<evidence type="ECO:0000255" key="2">
    <source>
        <dbReference type="PROSITE-ProRule" id="PRU00201"/>
    </source>
</evidence>
<evidence type="ECO:0000256" key="3">
    <source>
        <dbReference type="SAM" id="MobiDB-lite"/>
    </source>
</evidence>
<reference key="1">
    <citation type="submission" date="2004-12" db="EMBL/GenBank/DDBJ databases">
        <title>TBX5 cDNA clone from Rattus norvegicus embryo heart.</title>
        <authorList>
            <person name="Gong L.G."/>
            <person name="Sun K.L."/>
            <person name="Qiu G.R."/>
            <person name="Xu X.Y."/>
            <person name="Xin N."/>
        </authorList>
    </citation>
    <scope>NUCLEOTIDE SEQUENCE [MRNA]</scope>
    <source>
        <strain>Brown Norway</strain>
        <tissue>Heart</tissue>
    </source>
</reference>
<dbReference type="EMBL" id="AY859491">
    <property type="protein sequence ID" value="AAW33688.1"/>
    <property type="molecule type" value="mRNA"/>
</dbReference>
<dbReference type="RefSeq" id="NP_001009964.1">
    <property type="nucleotide sequence ID" value="NM_001009964.1"/>
</dbReference>
<dbReference type="SMR" id="Q5I2P1"/>
<dbReference type="FunCoup" id="Q5I2P1">
    <property type="interactions" value="64"/>
</dbReference>
<dbReference type="STRING" id="10116.ENSRNOP00000001893"/>
<dbReference type="PhosphoSitePlus" id="Q5I2P1"/>
<dbReference type="PaxDb" id="10116-ENSRNOP00000001893"/>
<dbReference type="GeneID" id="304514"/>
<dbReference type="KEGG" id="rno:304514"/>
<dbReference type="UCSC" id="RGD:1305702">
    <property type="organism name" value="rat"/>
</dbReference>
<dbReference type="AGR" id="RGD:1305702"/>
<dbReference type="CTD" id="6910"/>
<dbReference type="RGD" id="1305702">
    <property type="gene designation" value="Tbx5"/>
</dbReference>
<dbReference type="eggNOG" id="KOG3585">
    <property type="taxonomic scope" value="Eukaryota"/>
</dbReference>
<dbReference type="InParanoid" id="Q5I2P1"/>
<dbReference type="OrthoDB" id="7442607at2759"/>
<dbReference type="PhylomeDB" id="Q5I2P1"/>
<dbReference type="Reactome" id="R-RNO-2032785">
    <property type="pathway name" value="YAP1- and WWTR1 (TAZ)-stimulated gene expression"/>
</dbReference>
<dbReference type="PRO" id="PR:Q5I2P1"/>
<dbReference type="Proteomes" id="UP000002494">
    <property type="component" value="Unplaced"/>
</dbReference>
<dbReference type="GO" id="GO:0000785">
    <property type="term" value="C:chromatin"/>
    <property type="evidence" value="ECO:0000318"/>
    <property type="project" value="GO_Central"/>
</dbReference>
<dbReference type="GO" id="GO:0005737">
    <property type="term" value="C:cytoplasm"/>
    <property type="evidence" value="ECO:0000250"/>
    <property type="project" value="UniProtKB"/>
</dbReference>
<dbReference type="GO" id="GO:0005634">
    <property type="term" value="C:nucleus"/>
    <property type="evidence" value="ECO:0000250"/>
    <property type="project" value="UniProtKB"/>
</dbReference>
<dbReference type="GO" id="GO:0032991">
    <property type="term" value="C:protein-containing complex"/>
    <property type="evidence" value="ECO:0000250"/>
    <property type="project" value="UniProtKB"/>
</dbReference>
<dbReference type="GO" id="GO:0032993">
    <property type="term" value="C:protein-DNA complex"/>
    <property type="evidence" value="ECO:0000250"/>
    <property type="project" value="UniProtKB"/>
</dbReference>
<dbReference type="GO" id="GO:0005667">
    <property type="term" value="C:transcription regulator complex"/>
    <property type="evidence" value="ECO:0000266"/>
    <property type="project" value="RGD"/>
</dbReference>
<dbReference type="GO" id="GO:0003677">
    <property type="term" value="F:DNA binding"/>
    <property type="evidence" value="ECO:0000250"/>
    <property type="project" value="UniProtKB"/>
</dbReference>
<dbReference type="GO" id="GO:0001228">
    <property type="term" value="F:DNA-binding transcription activator activity, RNA polymerase II-specific"/>
    <property type="evidence" value="ECO:0000266"/>
    <property type="project" value="RGD"/>
</dbReference>
<dbReference type="GO" id="GO:0003700">
    <property type="term" value="F:DNA-binding transcription factor activity"/>
    <property type="evidence" value="ECO:0000250"/>
    <property type="project" value="UniProtKB"/>
</dbReference>
<dbReference type="GO" id="GO:0000981">
    <property type="term" value="F:DNA-binding transcription factor activity, RNA polymerase II-specific"/>
    <property type="evidence" value="ECO:0000250"/>
    <property type="project" value="UniProtKB"/>
</dbReference>
<dbReference type="GO" id="GO:0000978">
    <property type="term" value="F:RNA polymerase II cis-regulatory region sequence-specific DNA binding"/>
    <property type="evidence" value="ECO:0000250"/>
    <property type="project" value="UniProtKB"/>
</dbReference>
<dbReference type="GO" id="GO:0000977">
    <property type="term" value="F:RNA polymerase II transcription regulatory region sequence-specific DNA binding"/>
    <property type="evidence" value="ECO:0000266"/>
    <property type="project" value="RGD"/>
</dbReference>
<dbReference type="GO" id="GO:0061629">
    <property type="term" value="F:RNA polymerase II-specific DNA-binding transcription factor binding"/>
    <property type="evidence" value="ECO:0000266"/>
    <property type="project" value="RGD"/>
</dbReference>
<dbReference type="GO" id="GO:0043565">
    <property type="term" value="F:sequence-specific DNA binding"/>
    <property type="evidence" value="ECO:0000250"/>
    <property type="project" value="UniProtKB"/>
</dbReference>
<dbReference type="GO" id="GO:0048513">
    <property type="term" value="P:animal organ development"/>
    <property type="evidence" value="ECO:0000250"/>
    <property type="project" value="UniProtKB"/>
</dbReference>
<dbReference type="GO" id="GO:0003283">
    <property type="term" value="P:atrial septum development"/>
    <property type="evidence" value="ECO:0000266"/>
    <property type="project" value="RGD"/>
</dbReference>
<dbReference type="GO" id="GO:0060413">
    <property type="term" value="P:atrial septum morphogenesis"/>
    <property type="evidence" value="ECO:0000266"/>
    <property type="project" value="RGD"/>
</dbReference>
<dbReference type="GO" id="GO:0003167">
    <property type="term" value="P:atrioventricular bundle cell differentiation"/>
    <property type="evidence" value="ECO:0000266"/>
    <property type="project" value="RGD"/>
</dbReference>
<dbReference type="GO" id="GO:0060928">
    <property type="term" value="P:atrioventricular node cell development"/>
    <property type="evidence" value="ECO:0000266"/>
    <property type="project" value="RGD"/>
</dbReference>
<dbReference type="GO" id="GO:0060929">
    <property type="term" value="P:atrioventricular node cell fate commitment"/>
    <property type="evidence" value="ECO:0000266"/>
    <property type="project" value="RGD"/>
</dbReference>
<dbReference type="GO" id="GO:0003181">
    <property type="term" value="P:atrioventricular valve morphogenesis"/>
    <property type="evidence" value="ECO:0000266"/>
    <property type="project" value="RGD"/>
</dbReference>
<dbReference type="GO" id="GO:0086054">
    <property type="term" value="P:bundle of His cell to Purkinje myocyte communication by electrical coupling"/>
    <property type="evidence" value="ECO:0000266"/>
    <property type="project" value="RGD"/>
</dbReference>
<dbReference type="GO" id="GO:0003166">
    <property type="term" value="P:bundle of His development"/>
    <property type="evidence" value="ECO:0000266"/>
    <property type="project" value="RGD"/>
</dbReference>
<dbReference type="GO" id="GO:0003218">
    <property type="term" value="P:cardiac left ventricle formation"/>
    <property type="evidence" value="ECO:0000266"/>
    <property type="project" value="RGD"/>
</dbReference>
<dbReference type="GO" id="GO:0055007">
    <property type="term" value="P:cardiac muscle cell differentiation"/>
    <property type="evidence" value="ECO:0000266"/>
    <property type="project" value="RGD"/>
</dbReference>
<dbReference type="GO" id="GO:0060038">
    <property type="term" value="P:cardiac muscle cell proliferation"/>
    <property type="evidence" value="ECO:0000266"/>
    <property type="project" value="RGD"/>
</dbReference>
<dbReference type="GO" id="GO:0001708">
    <property type="term" value="P:cell fate specification"/>
    <property type="evidence" value="ECO:0000318"/>
    <property type="project" value="GO_Central"/>
</dbReference>
<dbReference type="GO" id="GO:0007267">
    <property type="term" value="P:cell-cell signaling"/>
    <property type="evidence" value="ECO:0000250"/>
    <property type="project" value="UniProtKB"/>
</dbReference>
<dbReference type="GO" id="GO:0035115">
    <property type="term" value="P:embryonic forelimb morphogenesis"/>
    <property type="evidence" value="ECO:0000250"/>
    <property type="project" value="UniProtKB"/>
</dbReference>
<dbReference type="GO" id="GO:0030326">
    <property type="term" value="P:embryonic limb morphogenesis"/>
    <property type="evidence" value="ECO:0000250"/>
    <property type="project" value="UniProtKB"/>
</dbReference>
<dbReference type="GO" id="GO:0003197">
    <property type="term" value="P:endocardial cushion development"/>
    <property type="evidence" value="ECO:0000266"/>
    <property type="project" value="RGD"/>
</dbReference>
<dbReference type="GO" id="GO:0035136">
    <property type="term" value="P:forelimb morphogenesis"/>
    <property type="evidence" value="ECO:0000266"/>
    <property type="project" value="RGD"/>
</dbReference>
<dbReference type="GO" id="GO:0007507">
    <property type="term" value="P:heart development"/>
    <property type="evidence" value="ECO:0000250"/>
    <property type="project" value="UniProtKB"/>
</dbReference>
<dbReference type="GO" id="GO:0030324">
    <property type="term" value="P:lung development"/>
    <property type="evidence" value="ECO:0000266"/>
    <property type="project" value="RGD"/>
</dbReference>
<dbReference type="GO" id="GO:0002009">
    <property type="term" value="P:morphogenesis of an epithelium"/>
    <property type="evidence" value="ECO:0000266"/>
    <property type="project" value="RGD"/>
</dbReference>
<dbReference type="GO" id="GO:0060044">
    <property type="term" value="P:negative regulation of cardiac muscle cell proliferation"/>
    <property type="evidence" value="ECO:0000250"/>
    <property type="project" value="UniProtKB"/>
</dbReference>
<dbReference type="GO" id="GO:0030336">
    <property type="term" value="P:negative regulation of cell migration"/>
    <property type="evidence" value="ECO:0000250"/>
    <property type="project" value="UniProtKB"/>
</dbReference>
<dbReference type="GO" id="GO:0008285">
    <property type="term" value="P:negative regulation of cell population proliferation"/>
    <property type="evidence" value="ECO:0000250"/>
    <property type="project" value="UniProtKB"/>
</dbReference>
<dbReference type="GO" id="GO:0007389">
    <property type="term" value="P:pattern specification process"/>
    <property type="evidence" value="ECO:0000266"/>
    <property type="project" value="RGD"/>
</dbReference>
<dbReference type="GO" id="GO:0060039">
    <property type="term" value="P:pericardium development"/>
    <property type="evidence" value="ECO:0000250"/>
    <property type="project" value="UniProtKB"/>
</dbReference>
<dbReference type="GO" id="GO:1903781">
    <property type="term" value="P:positive regulation of cardiac conduction"/>
    <property type="evidence" value="ECO:0000266"/>
    <property type="project" value="RGD"/>
</dbReference>
<dbReference type="GO" id="GO:0060045">
    <property type="term" value="P:positive regulation of cardiac muscle cell proliferation"/>
    <property type="evidence" value="ECO:0000266"/>
    <property type="project" value="RGD"/>
</dbReference>
<dbReference type="GO" id="GO:0051891">
    <property type="term" value="P:positive regulation of cardioblast differentiation"/>
    <property type="evidence" value="ECO:0000250"/>
    <property type="project" value="UniProtKB"/>
</dbReference>
<dbReference type="GO" id="GO:0045893">
    <property type="term" value="P:positive regulation of DNA-templated transcription"/>
    <property type="evidence" value="ECO:0000250"/>
    <property type="project" value="UniProtKB"/>
</dbReference>
<dbReference type="GO" id="GO:1903598">
    <property type="term" value="P:positive regulation of gap junction assembly"/>
    <property type="evidence" value="ECO:0000266"/>
    <property type="project" value="RGD"/>
</dbReference>
<dbReference type="GO" id="GO:0072513">
    <property type="term" value="P:positive regulation of secondary heart field cardioblast proliferation"/>
    <property type="evidence" value="ECO:0000266"/>
    <property type="project" value="RGD"/>
</dbReference>
<dbReference type="GO" id="GO:0045944">
    <property type="term" value="P:positive regulation of transcription by RNA polymerase II"/>
    <property type="evidence" value="ECO:0000250"/>
    <property type="project" value="UniProtKB"/>
</dbReference>
<dbReference type="GO" id="GO:0060371">
    <property type="term" value="P:regulation of atrial cardiac muscle cell membrane depolarization"/>
    <property type="evidence" value="ECO:0000266"/>
    <property type="project" value="RGD"/>
</dbReference>
<dbReference type="GO" id="GO:0006355">
    <property type="term" value="P:regulation of DNA-templated transcription"/>
    <property type="evidence" value="ECO:0000266"/>
    <property type="project" value="RGD"/>
</dbReference>
<dbReference type="GO" id="GO:0006357">
    <property type="term" value="P:regulation of transcription by RNA polymerase II"/>
    <property type="evidence" value="ECO:0000318"/>
    <property type="project" value="GO_Central"/>
</dbReference>
<dbReference type="GO" id="GO:1904044">
    <property type="term" value="P:response to aldosterone"/>
    <property type="evidence" value="ECO:0000270"/>
    <property type="project" value="RGD"/>
</dbReference>
<dbReference type="GO" id="GO:0003163">
    <property type="term" value="P:sinoatrial node development"/>
    <property type="evidence" value="ECO:0000266"/>
    <property type="project" value="RGD"/>
</dbReference>
<dbReference type="GO" id="GO:0006366">
    <property type="term" value="P:transcription by RNA polymerase II"/>
    <property type="evidence" value="ECO:0000266"/>
    <property type="project" value="RGD"/>
</dbReference>
<dbReference type="GO" id="GO:0060290">
    <property type="term" value="P:transdifferentiation"/>
    <property type="evidence" value="ECO:0000315"/>
    <property type="project" value="RGD"/>
</dbReference>
<dbReference type="GO" id="GO:0003229">
    <property type="term" value="P:ventricular cardiac muscle tissue development"/>
    <property type="evidence" value="ECO:0000266"/>
    <property type="project" value="RGD"/>
</dbReference>
<dbReference type="GO" id="GO:0003281">
    <property type="term" value="P:ventricular septum development"/>
    <property type="evidence" value="ECO:0000266"/>
    <property type="project" value="RGD"/>
</dbReference>
<dbReference type="CDD" id="cd20189">
    <property type="entry name" value="T-box_TBX4_5-like"/>
    <property type="match status" value="1"/>
</dbReference>
<dbReference type="FunFam" id="2.60.40.820:FF:000005">
    <property type="entry name" value="T-box transcription factor TBX5"/>
    <property type="match status" value="1"/>
</dbReference>
<dbReference type="Gene3D" id="2.60.40.820">
    <property type="entry name" value="Transcription factor, T-box"/>
    <property type="match status" value="1"/>
</dbReference>
<dbReference type="InterPro" id="IPR008967">
    <property type="entry name" value="p53-like_TF_DNA-bd_sf"/>
</dbReference>
<dbReference type="InterPro" id="IPR046360">
    <property type="entry name" value="T-box_DNA-bd"/>
</dbReference>
<dbReference type="InterPro" id="IPR036960">
    <property type="entry name" value="T-box_sf"/>
</dbReference>
<dbReference type="InterPro" id="IPR001699">
    <property type="entry name" value="TF_T-box"/>
</dbReference>
<dbReference type="InterPro" id="IPR018186">
    <property type="entry name" value="TF_T-box_CS"/>
</dbReference>
<dbReference type="PANTHER" id="PTHR11267">
    <property type="entry name" value="T-BOX PROTEIN-RELATED"/>
    <property type="match status" value="1"/>
</dbReference>
<dbReference type="PANTHER" id="PTHR11267:SF28">
    <property type="entry name" value="T-BOX TRANSCRIPTION FACTOR TBX5"/>
    <property type="match status" value="1"/>
</dbReference>
<dbReference type="Pfam" id="PF00907">
    <property type="entry name" value="T-box"/>
    <property type="match status" value="1"/>
</dbReference>
<dbReference type="PRINTS" id="PR00937">
    <property type="entry name" value="TBOX"/>
</dbReference>
<dbReference type="SMART" id="SM00425">
    <property type="entry name" value="TBOX"/>
    <property type="match status" value="1"/>
</dbReference>
<dbReference type="SUPFAM" id="SSF49417">
    <property type="entry name" value="p53-like transcription factors"/>
    <property type="match status" value="1"/>
</dbReference>
<dbReference type="PROSITE" id="PS01283">
    <property type="entry name" value="TBOX_1"/>
    <property type="match status" value="1"/>
</dbReference>
<dbReference type="PROSITE" id="PS01264">
    <property type="entry name" value="TBOX_2"/>
    <property type="match status" value="1"/>
</dbReference>
<dbReference type="PROSITE" id="PS50252">
    <property type="entry name" value="TBOX_3"/>
    <property type="match status" value="1"/>
</dbReference>
<accession>Q5I2P1</accession>
<name>TBX5_RAT</name>
<protein>
    <recommendedName>
        <fullName>T-box transcription factor TBX5</fullName>
        <shortName>T-box protein 5</shortName>
    </recommendedName>
</protein>